<evidence type="ECO:0000255" key="1">
    <source>
        <dbReference type="HAMAP-Rule" id="MF_01320"/>
    </source>
</evidence>
<evidence type="ECO:0000256" key="2">
    <source>
        <dbReference type="SAM" id="MobiDB-lite"/>
    </source>
</evidence>
<evidence type="ECO:0000305" key="3"/>
<sequence length="275" mass="30087">MAIVKVKPTSPGRRAMVKVVNKNLHQGKPFAALLDSQSSTAGRNNNGRITTRHKGGGHKQHYRIVDFRRTKDGIPAKVERLEYDPNRSANIALVLYADGERRYIIAPKGLTVGQQLMSGSEAPIRAGNTLPIRNIPVGTTIHCIEMLPGKGAQMARSAGTSAMLLAREGVYAQVRLRSGEIRRVHIECRATVGEVGNEEHSLRQIGKAGANRWRGIRPTVRGVAMNPVDHPHGGGEGKTAAGRDPVSPWGTPAKGYRTRSNKRTTTMIVQRRHKR</sequence>
<accession>A0K3M8</accession>
<dbReference type="EMBL" id="CP000458">
    <property type="protein sequence ID" value="ABK07105.1"/>
    <property type="molecule type" value="Genomic_DNA"/>
</dbReference>
<dbReference type="RefSeq" id="WP_011694106.1">
    <property type="nucleotide sequence ID" value="NC_008542.1"/>
</dbReference>
<dbReference type="SMR" id="A0K3M8"/>
<dbReference type="KEGG" id="bch:Bcen2424_0351"/>
<dbReference type="HOGENOM" id="CLU_036235_2_1_4"/>
<dbReference type="GO" id="GO:0015934">
    <property type="term" value="C:large ribosomal subunit"/>
    <property type="evidence" value="ECO:0007669"/>
    <property type="project" value="InterPro"/>
</dbReference>
<dbReference type="GO" id="GO:0019843">
    <property type="term" value="F:rRNA binding"/>
    <property type="evidence" value="ECO:0007669"/>
    <property type="project" value="UniProtKB-UniRule"/>
</dbReference>
<dbReference type="GO" id="GO:0003735">
    <property type="term" value="F:structural constituent of ribosome"/>
    <property type="evidence" value="ECO:0007669"/>
    <property type="project" value="InterPro"/>
</dbReference>
<dbReference type="GO" id="GO:0016740">
    <property type="term" value="F:transferase activity"/>
    <property type="evidence" value="ECO:0007669"/>
    <property type="project" value="InterPro"/>
</dbReference>
<dbReference type="GO" id="GO:0002181">
    <property type="term" value="P:cytoplasmic translation"/>
    <property type="evidence" value="ECO:0007669"/>
    <property type="project" value="TreeGrafter"/>
</dbReference>
<dbReference type="FunFam" id="2.30.30.30:FF:000001">
    <property type="entry name" value="50S ribosomal protein L2"/>
    <property type="match status" value="1"/>
</dbReference>
<dbReference type="FunFam" id="2.40.50.140:FF:000003">
    <property type="entry name" value="50S ribosomal protein L2"/>
    <property type="match status" value="1"/>
</dbReference>
<dbReference type="FunFam" id="4.10.950.10:FF:000001">
    <property type="entry name" value="50S ribosomal protein L2"/>
    <property type="match status" value="1"/>
</dbReference>
<dbReference type="Gene3D" id="2.30.30.30">
    <property type="match status" value="1"/>
</dbReference>
<dbReference type="Gene3D" id="2.40.50.140">
    <property type="entry name" value="Nucleic acid-binding proteins"/>
    <property type="match status" value="1"/>
</dbReference>
<dbReference type="Gene3D" id="4.10.950.10">
    <property type="entry name" value="Ribosomal protein L2, domain 3"/>
    <property type="match status" value="1"/>
</dbReference>
<dbReference type="HAMAP" id="MF_01320_B">
    <property type="entry name" value="Ribosomal_uL2_B"/>
    <property type="match status" value="1"/>
</dbReference>
<dbReference type="InterPro" id="IPR012340">
    <property type="entry name" value="NA-bd_OB-fold"/>
</dbReference>
<dbReference type="InterPro" id="IPR014722">
    <property type="entry name" value="Rib_uL2_dom2"/>
</dbReference>
<dbReference type="InterPro" id="IPR002171">
    <property type="entry name" value="Ribosomal_uL2"/>
</dbReference>
<dbReference type="InterPro" id="IPR005880">
    <property type="entry name" value="Ribosomal_uL2_bac/org-type"/>
</dbReference>
<dbReference type="InterPro" id="IPR022669">
    <property type="entry name" value="Ribosomal_uL2_C"/>
</dbReference>
<dbReference type="InterPro" id="IPR022671">
    <property type="entry name" value="Ribosomal_uL2_CS"/>
</dbReference>
<dbReference type="InterPro" id="IPR014726">
    <property type="entry name" value="Ribosomal_uL2_dom3"/>
</dbReference>
<dbReference type="InterPro" id="IPR022666">
    <property type="entry name" value="Ribosomal_uL2_RNA-bd_dom"/>
</dbReference>
<dbReference type="InterPro" id="IPR008991">
    <property type="entry name" value="Translation_prot_SH3-like_sf"/>
</dbReference>
<dbReference type="NCBIfam" id="TIGR01171">
    <property type="entry name" value="rplB_bact"/>
    <property type="match status" value="1"/>
</dbReference>
<dbReference type="PANTHER" id="PTHR13691:SF5">
    <property type="entry name" value="LARGE RIBOSOMAL SUBUNIT PROTEIN UL2M"/>
    <property type="match status" value="1"/>
</dbReference>
<dbReference type="PANTHER" id="PTHR13691">
    <property type="entry name" value="RIBOSOMAL PROTEIN L2"/>
    <property type="match status" value="1"/>
</dbReference>
<dbReference type="Pfam" id="PF00181">
    <property type="entry name" value="Ribosomal_L2"/>
    <property type="match status" value="1"/>
</dbReference>
<dbReference type="Pfam" id="PF03947">
    <property type="entry name" value="Ribosomal_L2_C"/>
    <property type="match status" value="1"/>
</dbReference>
<dbReference type="PIRSF" id="PIRSF002158">
    <property type="entry name" value="Ribosomal_L2"/>
    <property type="match status" value="1"/>
</dbReference>
<dbReference type="SMART" id="SM01383">
    <property type="entry name" value="Ribosomal_L2"/>
    <property type="match status" value="1"/>
</dbReference>
<dbReference type="SMART" id="SM01382">
    <property type="entry name" value="Ribosomal_L2_C"/>
    <property type="match status" value="1"/>
</dbReference>
<dbReference type="SUPFAM" id="SSF50249">
    <property type="entry name" value="Nucleic acid-binding proteins"/>
    <property type="match status" value="1"/>
</dbReference>
<dbReference type="SUPFAM" id="SSF50104">
    <property type="entry name" value="Translation proteins SH3-like domain"/>
    <property type="match status" value="1"/>
</dbReference>
<dbReference type="PROSITE" id="PS00467">
    <property type="entry name" value="RIBOSOMAL_L2"/>
    <property type="match status" value="1"/>
</dbReference>
<protein>
    <recommendedName>
        <fullName evidence="1">Large ribosomal subunit protein uL2</fullName>
    </recommendedName>
    <alternativeName>
        <fullName evidence="3">50S ribosomal protein L2</fullName>
    </alternativeName>
</protein>
<proteinExistence type="inferred from homology"/>
<organism>
    <name type="scientific">Burkholderia cenocepacia (strain HI2424)</name>
    <dbReference type="NCBI Taxonomy" id="331272"/>
    <lineage>
        <taxon>Bacteria</taxon>
        <taxon>Pseudomonadati</taxon>
        <taxon>Pseudomonadota</taxon>
        <taxon>Betaproteobacteria</taxon>
        <taxon>Burkholderiales</taxon>
        <taxon>Burkholderiaceae</taxon>
        <taxon>Burkholderia</taxon>
        <taxon>Burkholderia cepacia complex</taxon>
    </lineage>
</organism>
<gene>
    <name evidence="1" type="primary">rplB</name>
    <name type="ordered locus">Bcen2424_0351</name>
</gene>
<name>RL2_BURCH</name>
<reference key="1">
    <citation type="submission" date="2006-08" db="EMBL/GenBank/DDBJ databases">
        <title>Complete sequence of chromosome 1 of Burkholderia cenocepacia HI2424.</title>
        <authorList>
            <person name="Copeland A."/>
            <person name="Lucas S."/>
            <person name="Lapidus A."/>
            <person name="Barry K."/>
            <person name="Detter J.C."/>
            <person name="Glavina del Rio T."/>
            <person name="Hammon N."/>
            <person name="Israni S."/>
            <person name="Pitluck S."/>
            <person name="Chain P."/>
            <person name="Malfatti S."/>
            <person name="Shin M."/>
            <person name="Vergez L."/>
            <person name="Schmutz J."/>
            <person name="Larimer F."/>
            <person name="Land M."/>
            <person name="Hauser L."/>
            <person name="Kyrpides N."/>
            <person name="Kim E."/>
            <person name="LiPuma J.J."/>
            <person name="Gonzalez C.F."/>
            <person name="Konstantinidis K."/>
            <person name="Tiedje J.M."/>
            <person name="Richardson P."/>
        </authorList>
    </citation>
    <scope>NUCLEOTIDE SEQUENCE [LARGE SCALE GENOMIC DNA]</scope>
    <source>
        <strain>HI2424</strain>
    </source>
</reference>
<comment type="function">
    <text evidence="1">One of the primary rRNA binding proteins. Required for association of the 30S and 50S subunits to form the 70S ribosome, for tRNA binding and peptide bond formation. It has been suggested to have peptidyltransferase activity; this is somewhat controversial. Makes several contacts with the 16S rRNA in the 70S ribosome.</text>
</comment>
<comment type="subunit">
    <text evidence="1">Part of the 50S ribosomal subunit. Forms a bridge to the 30S subunit in the 70S ribosome.</text>
</comment>
<comment type="similarity">
    <text evidence="1">Belongs to the universal ribosomal protein uL2 family.</text>
</comment>
<feature type="chain" id="PRO_0000309881" description="Large ribosomal subunit protein uL2">
    <location>
        <begin position="1"/>
        <end position="275"/>
    </location>
</feature>
<feature type="region of interest" description="Disordered" evidence="2">
    <location>
        <begin position="35"/>
        <end position="59"/>
    </location>
</feature>
<feature type="region of interest" description="Disordered" evidence="2">
    <location>
        <begin position="224"/>
        <end position="275"/>
    </location>
</feature>
<feature type="compositionally biased region" description="Polar residues" evidence="2">
    <location>
        <begin position="35"/>
        <end position="49"/>
    </location>
</feature>
<feature type="compositionally biased region" description="Basic residues" evidence="2">
    <location>
        <begin position="50"/>
        <end position="59"/>
    </location>
</feature>
<keyword id="KW-0687">Ribonucleoprotein</keyword>
<keyword id="KW-0689">Ribosomal protein</keyword>
<keyword id="KW-0694">RNA-binding</keyword>
<keyword id="KW-0699">rRNA-binding</keyword>